<feature type="chain" id="PRO_1000143356" description="ATP synthase subunit alpha">
    <location>
        <begin position="1"/>
        <end position="504"/>
    </location>
</feature>
<feature type="binding site" evidence="1">
    <location>
        <begin position="169"/>
        <end position="176"/>
    </location>
    <ligand>
        <name>ATP</name>
        <dbReference type="ChEBI" id="CHEBI:30616"/>
    </ligand>
</feature>
<feature type="site" description="Required for activity" evidence="1">
    <location>
        <position position="362"/>
    </location>
</feature>
<organism>
    <name type="scientific">Clostridium botulinum (strain Alaska E43 / Type E3)</name>
    <dbReference type="NCBI Taxonomy" id="508767"/>
    <lineage>
        <taxon>Bacteria</taxon>
        <taxon>Bacillati</taxon>
        <taxon>Bacillota</taxon>
        <taxon>Clostridia</taxon>
        <taxon>Eubacteriales</taxon>
        <taxon>Clostridiaceae</taxon>
        <taxon>Clostridium</taxon>
    </lineage>
</organism>
<dbReference type="EC" id="7.1.2.2" evidence="1"/>
<dbReference type="EMBL" id="CP001078">
    <property type="protein sequence ID" value="ACD51056.1"/>
    <property type="molecule type" value="Genomic_DNA"/>
</dbReference>
<dbReference type="RefSeq" id="WP_003370679.1">
    <property type="nucleotide sequence ID" value="NC_010723.1"/>
</dbReference>
<dbReference type="SMR" id="B2UZJ8"/>
<dbReference type="KEGG" id="cbt:CLH_0488"/>
<dbReference type="HOGENOM" id="CLU_010091_2_1_9"/>
<dbReference type="GO" id="GO:0005886">
    <property type="term" value="C:plasma membrane"/>
    <property type="evidence" value="ECO:0007669"/>
    <property type="project" value="UniProtKB-SubCell"/>
</dbReference>
<dbReference type="GO" id="GO:0045259">
    <property type="term" value="C:proton-transporting ATP synthase complex"/>
    <property type="evidence" value="ECO:0007669"/>
    <property type="project" value="UniProtKB-KW"/>
</dbReference>
<dbReference type="GO" id="GO:0043531">
    <property type="term" value="F:ADP binding"/>
    <property type="evidence" value="ECO:0007669"/>
    <property type="project" value="TreeGrafter"/>
</dbReference>
<dbReference type="GO" id="GO:0005524">
    <property type="term" value="F:ATP binding"/>
    <property type="evidence" value="ECO:0007669"/>
    <property type="project" value="UniProtKB-UniRule"/>
</dbReference>
<dbReference type="GO" id="GO:0046933">
    <property type="term" value="F:proton-transporting ATP synthase activity, rotational mechanism"/>
    <property type="evidence" value="ECO:0007669"/>
    <property type="project" value="UniProtKB-UniRule"/>
</dbReference>
<dbReference type="CDD" id="cd18113">
    <property type="entry name" value="ATP-synt_F1_alpha_C"/>
    <property type="match status" value="1"/>
</dbReference>
<dbReference type="CDD" id="cd18116">
    <property type="entry name" value="ATP-synt_F1_alpha_N"/>
    <property type="match status" value="1"/>
</dbReference>
<dbReference type="CDD" id="cd01132">
    <property type="entry name" value="F1-ATPase_alpha_CD"/>
    <property type="match status" value="1"/>
</dbReference>
<dbReference type="FunFam" id="1.20.150.20:FF:000001">
    <property type="entry name" value="ATP synthase subunit alpha"/>
    <property type="match status" value="1"/>
</dbReference>
<dbReference type="FunFam" id="2.40.30.20:FF:000001">
    <property type="entry name" value="ATP synthase subunit alpha"/>
    <property type="match status" value="1"/>
</dbReference>
<dbReference type="FunFam" id="3.40.50.300:FF:000002">
    <property type="entry name" value="ATP synthase subunit alpha"/>
    <property type="match status" value="1"/>
</dbReference>
<dbReference type="Gene3D" id="2.40.30.20">
    <property type="match status" value="1"/>
</dbReference>
<dbReference type="Gene3D" id="1.20.150.20">
    <property type="entry name" value="ATP synthase alpha/beta chain, C-terminal domain"/>
    <property type="match status" value="1"/>
</dbReference>
<dbReference type="Gene3D" id="3.40.50.300">
    <property type="entry name" value="P-loop containing nucleotide triphosphate hydrolases"/>
    <property type="match status" value="1"/>
</dbReference>
<dbReference type="HAMAP" id="MF_01346">
    <property type="entry name" value="ATP_synth_alpha_bact"/>
    <property type="match status" value="1"/>
</dbReference>
<dbReference type="InterPro" id="IPR023366">
    <property type="entry name" value="ATP_synth_asu-like_sf"/>
</dbReference>
<dbReference type="InterPro" id="IPR000793">
    <property type="entry name" value="ATP_synth_asu_C"/>
</dbReference>
<dbReference type="InterPro" id="IPR038376">
    <property type="entry name" value="ATP_synth_asu_C_sf"/>
</dbReference>
<dbReference type="InterPro" id="IPR033732">
    <property type="entry name" value="ATP_synth_F1_a_nt-bd_dom"/>
</dbReference>
<dbReference type="InterPro" id="IPR005294">
    <property type="entry name" value="ATP_synth_F1_asu"/>
</dbReference>
<dbReference type="InterPro" id="IPR020003">
    <property type="entry name" value="ATPase_a/bsu_AS"/>
</dbReference>
<dbReference type="InterPro" id="IPR004100">
    <property type="entry name" value="ATPase_F1/V1/A1_a/bsu_N"/>
</dbReference>
<dbReference type="InterPro" id="IPR036121">
    <property type="entry name" value="ATPase_F1/V1/A1_a/bsu_N_sf"/>
</dbReference>
<dbReference type="InterPro" id="IPR000194">
    <property type="entry name" value="ATPase_F1/V1/A1_a/bsu_nucl-bd"/>
</dbReference>
<dbReference type="InterPro" id="IPR027417">
    <property type="entry name" value="P-loop_NTPase"/>
</dbReference>
<dbReference type="NCBIfam" id="TIGR00962">
    <property type="entry name" value="atpA"/>
    <property type="match status" value="1"/>
</dbReference>
<dbReference type="NCBIfam" id="NF009884">
    <property type="entry name" value="PRK13343.1"/>
    <property type="match status" value="1"/>
</dbReference>
<dbReference type="PANTHER" id="PTHR48082">
    <property type="entry name" value="ATP SYNTHASE SUBUNIT ALPHA, MITOCHONDRIAL"/>
    <property type="match status" value="1"/>
</dbReference>
<dbReference type="PANTHER" id="PTHR48082:SF2">
    <property type="entry name" value="ATP SYNTHASE SUBUNIT ALPHA, MITOCHONDRIAL"/>
    <property type="match status" value="1"/>
</dbReference>
<dbReference type="Pfam" id="PF00006">
    <property type="entry name" value="ATP-synt_ab"/>
    <property type="match status" value="1"/>
</dbReference>
<dbReference type="Pfam" id="PF00306">
    <property type="entry name" value="ATP-synt_ab_C"/>
    <property type="match status" value="1"/>
</dbReference>
<dbReference type="Pfam" id="PF02874">
    <property type="entry name" value="ATP-synt_ab_N"/>
    <property type="match status" value="1"/>
</dbReference>
<dbReference type="PIRSF" id="PIRSF039088">
    <property type="entry name" value="F_ATPase_subunit_alpha"/>
    <property type="match status" value="1"/>
</dbReference>
<dbReference type="SUPFAM" id="SSF47917">
    <property type="entry name" value="C-terminal domain of alpha and beta subunits of F1 ATP synthase"/>
    <property type="match status" value="1"/>
</dbReference>
<dbReference type="SUPFAM" id="SSF50615">
    <property type="entry name" value="N-terminal domain of alpha and beta subunits of F1 ATP synthase"/>
    <property type="match status" value="1"/>
</dbReference>
<dbReference type="SUPFAM" id="SSF52540">
    <property type="entry name" value="P-loop containing nucleoside triphosphate hydrolases"/>
    <property type="match status" value="1"/>
</dbReference>
<dbReference type="PROSITE" id="PS00152">
    <property type="entry name" value="ATPASE_ALPHA_BETA"/>
    <property type="match status" value="1"/>
</dbReference>
<name>ATPA_CLOBA</name>
<protein>
    <recommendedName>
        <fullName evidence="1">ATP synthase subunit alpha</fullName>
        <ecNumber evidence="1">7.1.2.2</ecNumber>
    </recommendedName>
    <alternativeName>
        <fullName evidence="1">ATP synthase F1 sector subunit alpha</fullName>
    </alternativeName>
    <alternativeName>
        <fullName evidence="1">F-ATPase subunit alpha</fullName>
    </alternativeName>
</protein>
<reference key="1">
    <citation type="submission" date="2008-05" db="EMBL/GenBank/DDBJ databases">
        <title>Complete genome sequence of Clostridium botulinum E3 str. Alaska E43.</title>
        <authorList>
            <person name="Brinkac L.M."/>
            <person name="Brown J.L."/>
            <person name="Bruce D."/>
            <person name="Detter C."/>
            <person name="Munk C."/>
            <person name="Smith L.A."/>
            <person name="Smith T.J."/>
            <person name="Sutton G."/>
            <person name="Brettin T.S."/>
        </authorList>
    </citation>
    <scope>NUCLEOTIDE SEQUENCE [LARGE SCALE GENOMIC DNA]</scope>
    <source>
        <strain>Alaska E43 / Type E3</strain>
    </source>
</reference>
<evidence type="ECO:0000255" key="1">
    <source>
        <dbReference type="HAMAP-Rule" id="MF_01346"/>
    </source>
</evidence>
<keyword id="KW-0066">ATP synthesis</keyword>
<keyword id="KW-0067">ATP-binding</keyword>
<keyword id="KW-1003">Cell membrane</keyword>
<keyword id="KW-0139">CF(1)</keyword>
<keyword id="KW-0375">Hydrogen ion transport</keyword>
<keyword id="KW-0406">Ion transport</keyword>
<keyword id="KW-0472">Membrane</keyword>
<keyword id="KW-0547">Nucleotide-binding</keyword>
<keyword id="KW-1278">Translocase</keyword>
<keyword id="KW-0813">Transport</keyword>
<accession>B2UZJ8</accession>
<proteinExistence type="inferred from homology"/>
<comment type="function">
    <text evidence="1">Produces ATP from ADP in the presence of a proton gradient across the membrane. The alpha chain is a regulatory subunit.</text>
</comment>
<comment type="catalytic activity">
    <reaction evidence="1">
        <text>ATP + H2O + 4 H(+)(in) = ADP + phosphate + 5 H(+)(out)</text>
        <dbReference type="Rhea" id="RHEA:57720"/>
        <dbReference type="ChEBI" id="CHEBI:15377"/>
        <dbReference type="ChEBI" id="CHEBI:15378"/>
        <dbReference type="ChEBI" id="CHEBI:30616"/>
        <dbReference type="ChEBI" id="CHEBI:43474"/>
        <dbReference type="ChEBI" id="CHEBI:456216"/>
        <dbReference type="EC" id="7.1.2.2"/>
    </reaction>
</comment>
<comment type="subunit">
    <text evidence="1">F-type ATPases have 2 components, CF(1) - the catalytic core - and CF(0) - the membrane proton channel. CF(1) has five subunits: alpha(3), beta(3), gamma(1), delta(1), epsilon(1). CF(0) has three main subunits: a(1), b(2) and c(9-12). The alpha and beta chains form an alternating ring which encloses part of the gamma chain. CF(1) is attached to CF(0) by a central stalk formed by the gamma and epsilon chains, while a peripheral stalk is formed by the delta and b chains.</text>
</comment>
<comment type="subcellular location">
    <subcellularLocation>
        <location evidence="1">Cell membrane</location>
        <topology evidence="1">Peripheral membrane protein</topology>
    </subcellularLocation>
</comment>
<comment type="similarity">
    <text evidence="1">Belongs to the ATPase alpha/beta chains family.</text>
</comment>
<sequence length="504" mass="55430">MNIKPEEITSIIKKEIEKYEKQIKTVDSGTIIQVGDGVSRVYGLDDCMEGELLEFPNDVYGMALNLEQDNVGCVLLGNEEGIKEGDIVKGSGKIVEVPVGEALIGRVVNSLGEELDGKGPINTNQTRPIEVKAPSIIDRSSVNEPLQTGIKAIDSMIPIGKGQRELIIGDRQTGKTALVIDTILNQKGKDVICIYVAIGQKQSTVAHIVNTLTEMGAMDYSIIVSSTAADSAPLQYLAPYAGCSIGEYFMNQGKDVLIVYDDLSKHAVAYRTMSLLLRRPPGREAYPGDVFYIHSRLLERAAKLSEENGGGSLTALPIIETLAGDITAYIPTNVISITDGQIFLESDLFNSGQRPAVNAGISVSRVGGNAQIKAMKQVTGTLRLELAQYRELAAFAQFGSDLDKDSKKRLEKGKRLVEILKQDQYKPLEVEKQVIILYTAVNDFLSDIKVEDIKKFEKELLEYVDTHYRELGRQIAEEKVLTDEIKAKLEVAIVEFKKIFLQEA</sequence>
<gene>
    <name evidence="1" type="primary">atpA</name>
    <name type="ordered locus">CLH_0488</name>
</gene>